<dbReference type="EC" id="2.7.7.6" evidence="1"/>
<dbReference type="EMBL" id="AE005674">
    <property type="protein sequence ID" value="AAN45136.1"/>
    <property type="molecule type" value="Genomic_DNA"/>
</dbReference>
<dbReference type="EMBL" id="AE014073">
    <property type="protein sequence ID" value="AAP19057.1"/>
    <property type="molecule type" value="Genomic_DNA"/>
</dbReference>
<dbReference type="RefSeq" id="NP_709429.1">
    <property type="nucleotide sequence ID" value="NC_004337.2"/>
</dbReference>
<dbReference type="RefSeq" id="WP_000135056.1">
    <property type="nucleotide sequence ID" value="NZ_WPGW01000042.1"/>
</dbReference>
<dbReference type="SMR" id="Q83PM8"/>
<dbReference type="STRING" id="198214.SF3689"/>
<dbReference type="PaxDb" id="198214-SF3689"/>
<dbReference type="GeneID" id="1024175"/>
<dbReference type="KEGG" id="sfl:SF3689"/>
<dbReference type="KEGG" id="sfx:S4080"/>
<dbReference type="PATRIC" id="fig|198214.7.peg.4353"/>
<dbReference type="HOGENOM" id="CLU_125406_5_3_6"/>
<dbReference type="Proteomes" id="UP000001006">
    <property type="component" value="Chromosome"/>
</dbReference>
<dbReference type="Proteomes" id="UP000002673">
    <property type="component" value="Chromosome"/>
</dbReference>
<dbReference type="GO" id="GO:0000428">
    <property type="term" value="C:DNA-directed RNA polymerase complex"/>
    <property type="evidence" value="ECO:0007669"/>
    <property type="project" value="UniProtKB-KW"/>
</dbReference>
<dbReference type="GO" id="GO:0003677">
    <property type="term" value="F:DNA binding"/>
    <property type="evidence" value="ECO:0007669"/>
    <property type="project" value="UniProtKB-UniRule"/>
</dbReference>
<dbReference type="GO" id="GO:0003899">
    <property type="term" value="F:DNA-directed RNA polymerase activity"/>
    <property type="evidence" value="ECO:0007669"/>
    <property type="project" value="UniProtKB-UniRule"/>
</dbReference>
<dbReference type="GO" id="GO:0006351">
    <property type="term" value="P:DNA-templated transcription"/>
    <property type="evidence" value="ECO:0007669"/>
    <property type="project" value="UniProtKB-UniRule"/>
</dbReference>
<dbReference type="FunFam" id="3.90.940.10:FF:000001">
    <property type="entry name" value="DNA-directed RNA polymerase subunit omega"/>
    <property type="match status" value="1"/>
</dbReference>
<dbReference type="Gene3D" id="3.90.940.10">
    <property type="match status" value="1"/>
</dbReference>
<dbReference type="HAMAP" id="MF_00366">
    <property type="entry name" value="RNApol_bact_RpoZ"/>
    <property type="match status" value="1"/>
</dbReference>
<dbReference type="InterPro" id="IPR003716">
    <property type="entry name" value="DNA-dir_RNA_pol_omega"/>
</dbReference>
<dbReference type="InterPro" id="IPR006110">
    <property type="entry name" value="Pol_omega/Rpo6/RPB6"/>
</dbReference>
<dbReference type="InterPro" id="IPR036161">
    <property type="entry name" value="RPB6/omega-like_sf"/>
</dbReference>
<dbReference type="NCBIfam" id="TIGR00690">
    <property type="entry name" value="rpoZ"/>
    <property type="match status" value="1"/>
</dbReference>
<dbReference type="PANTHER" id="PTHR34476">
    <property type="entry name" value="DNA-DIRECTED RNA POLYMERASE SUBUNIT OMEGA"/>
    <property type="match status" value="1"/>
</dbReference>
<dbReference type="PANTHER" id="PTHR34476:SF1">
    <property type="entry name" value="DNA-DIRECTED RNA POLYMERASE SUBUNIT OMEGA"/>
    <property type="match status" value="1"/>
</dbReference>
<dbReference type="Pfam" id="PF01192">
    <property type="entry name" value="RNA_pol_Rpb6"/>
    <property type="match status" value="1"/>
</dbReference>
<dbReference type="SMART" id="SM01409">
    <property type="entry name" value="RNA_pol_Rpb6"/>
    <property type="match status" value="1"/>
</dbReference>
<dbReference type="SUPFAM" id="SSF63562">
    <property type="entry name" value="RPB6/omega subunit-like"/>
    <property type="match status" value="1"/>
</dbReference>
<reference key="1">
    <citation type="journal article" date="2002" name="Nucleic Acids Res.">
        <title>Genome sequence of Shigella flexneri 2a: insights into pathogenicity through comparison with genomes of Escherichia coli K12 and O157.</title>
        <authorList>
            <person name="Jin Q."/>
            <person name="Yuan Z."/>
            <person name="Xu J."/>
            <person name="Wang Y."/>
            <person name="Shen Y."/>
            <person name="Lu W."/>
            <person name="Wang J."/>
            <person name="Liu H."/>
            <person name="Yang J."/>
            <person name="Yang F."/>
            <person name="Zhang X."/>
            <person name="Zhang J."/>
            <person name="Yang G."/>
            <person name="Wu H."/>
            <person name="Qu D."/>
            <person name="Dong J."/>
            <person name="Sun L."/>
            <person name="Xue Y."/>
            <person name="Zhao A."/>
            <person name="Gao Y."/>
            <person name="Zhu J."/>
            <person name="Kan B."/>
            <person name="Ding K."/>
            <person name="Chen S."/>
            <person name="Cheng H."/>
            <person name="Yao Z."/>
            <person name="He B."/>
            <person name="Chen R."/>
            <person name="Ma D."/>
            <person name="Qiang B."/>
            <person name="Wen Y."/>
            <person name="Hou Y."/>
            <person name="Yu J."/>
        </authorList>
    </citation>
    <scope>NUCLEOTIDE SEQUENCE [LARGE SCALE GENOMIC DNA]</scope>
    <source>
        <strain>301 / Serotype 2a</strain>
    </source>
</reference>
<reference key="2">
    <citation type="journal article" date="2003" name="Infect. Immun.">
        <title>Complete genome sequence and comparative genomics of Shigella flexneri serotype 2a strain 2457T.</title>
        <authorList>
            <person name="Wei J."/>
            <person name="Goldberg M.B."/>
            <person name="Burland V."/>
            <person name="Venkatesan M.M."/>
            <person name="Deng W."/>
            <person name="Fournier G."/>
            <person name="Mayhew G.F."/>
            <person name="Plunkett G. III"/>
            <person name="Rose D.J."/>
            <person name="Darling A."/>
            <person name="Mau B."/>
            <person name="Perna N.T."/>
            <person name="Payne S.M."/>
            <person name="Runyen-Janecky L.J."/>
            <person name="Zhou S."/>
            <person name="Schwartz D.C."/>
            <person name="Blattner F.R."/>
        </authorList>
    </citation>
    <scope>NUCLEOTIDE SEQUENCE [LARGE SCALE GENOMIC DNA]</scope>
    <source>
        <strain>ATCC 700930 / 2457T / Serotype 2a</strain>
    </source>
</reference>
<feature type="chain" id="PRO_0000128976" description="DNA-directed RNA polymerase subunit omega">
    <location>
        <begin position="1"/>
        <end position="91"/>
    </location>
</feature>
<gene>
    <name evidence="1" type="primary">rpoZ</name>
    <name type="ordered locus">SF3689</name>
    <name type="ordered locus">S4080</name>
</gene>
<accession>Q83PM8</accession>
<keyword id="KW-0240">DNA-directed RNA polymerase</keyword>
<keyword id="KW-0548">Nucleotidyltransferase</keyword>
<keyword id="KW-1185">Reference proteome</keyword>
<keyword id="KW-0804">Transcription</keyword>
<keyword id="KW-0808">Transferase</keyword>
<comment type="function">
    <text evidence="1">Promotes RNA polymerase assembly. Latches the N- and C-terminal regions of the beta' subunit thereby facilitating its interaction with the beta and alpha subunits.</text>
</comment>
<comment type="catalytic activity">
    <reaction evidence="1">
        <text>RNA(n) + a ribonucleoside 5'-triphosphate = RNA(n+1) + diphosphate</text>
        <dbReference type="Rhea" id="RHEA:21248"/>
        <dbReference type="Rhea" id="RHEA-COMP:14527"/>
        <dbReference type="Rhea" id="RHEA-COMP:17342"/>
        <dbReference type="ChEBI" id="CHEBI:33019"/>
        <dbReference type="ChEBI" id="CHEBI:61557"/>
        <dbReference type="ChEBI" id="CHEBI:140395"/>
        <dbReference type="EC" id="2.7.7.6"/>
    </reaction>
</comment>
<comment type="subunit">
    <text evidence="1">The RNAP catalytic core consists of 2 alpha, 1 beta, 1 beta' and 1 omega subunit. When a sigma factor is associated with the core the holoenzyme is formed, which can initiate transcription.</text>
</comment>
<comment type="similarity">
    <text evidence="1">Belongs to the RNA polymerase subunit omega family.</text>
</comment>
<proteinExistence type="inferred from homology"/>
<evidence type="ECO:0000255" key="1">
    <source>
        <dbReference type="HAMAP-Rule" id="MF_00366"/>
    </source>
</evidence>
<organism>
    <name type="scientific">Shigella flexneri</name>
    <dbReference type="NCBI Taxonomy" id="623"/>
    <lineage>
        <taxon>Bacteria</taxon>
        <taxon>Pseudomonadati</taxon>
        <taxon>Pseudomonadota</taxon>
        <taxon>Gammaproteobacteria</taxon>
        <taxon>Enterobacterales</taxon>
        <taxon>Enterobacteriaceae</taxon>
        <taxon>Shigella</taxon>
    </lineage>
</organism>
<protein>
    <recommendedName>
        <fullName evidence="1">DNA-directed RNA polymerase subunit omega</fullName>
        <shortName evidence="1">RNAP omega subunit</shortName>
        <ecNumber evidence="1">2.7.7.6</ecNumber>
    </recommendedName>
    <alternativeName>
        <fullName evidence="1">RNA polymerase omega subunit</fullName>
    </alternativeName>
    <alternativeName>
        <fullName evidence="1">Transcriptase subunit omega</fullName>
    </alternativeName>
</protein>
<sequence length="91" mass="10222">MARVTVQDAVEKIGNRFDLVLVAARRARQMQVGGKDPLVPEENDKTTVIALREIEEGLINNQILDVRERQEQQELEAAELQAVTAIAEGRR</sequence>
<name>RPOZ_SHIFL</name>